<proteinExistence type="predicted"/>
<name>Y061A_ABVP</name>
<organism>
    <name type="scientific">Acidianus bottle-shaped virus (isolate Italy/Pozzuoli)</name>
    <name type="common">ABV</name>
    <dbReference type="NCBI Taxonomy" id="654911"/>
    <lineage>
        <taxon>Viruses</taxon>
        <taxon>Viruses incertae sedis</taxon>
        <taxon>Ampullaviridae</taxon>
        <taxon>Bottigliavirus</taxon>
        <taxon>Bottigliavirus ABV</taxon>
    </lineage>
</organism>
<gene>
    <name type="ORF">ORF61a</name>
</gene>
<organismHost>
    <name type="scientific">Acidianus convivator</name>
    <dbReference type="NCBI Taxonomy" id="269667"/>
</organismHost>
<protein>
    <recommendedName>
        <fullName>Uncharacterized protein ORF61a</fullName>
    </recommendedName>
</protein>
<accession>A4ZUA9</accession>
<reference key="1">
    <citation type="journal article" date="2007" name="Virology">
        <title>Genome of the Acidianus bottle-shaped virus and insights into the replication and packaging mechanisms.</title>
        <authorList>
            <person name="Peng X."/>
            <person name="Basta T."/>
            <person name="Haring M."/>
            <person name="Garrett R.A."/>
            <person name="Prangishvili D."/>
        </authorList>
    </citation>
    <scope>NUCLEOTIDE SEQUENCE [GENOMIC DNA]</scope>
</reference>
<sequence>MAQFLGLGDIGGNLVYELIMILYKIFKFISLKILDGLGNFMEIALEYLVKFVYQITRFIHR</sequence>
<feature type="chain" id="PRO_0000384829" description="Uncharacterized protein ORF61a">
    <location>
        <begin position="1"/>
        <end position="61"/>
    </location>
</feature>
<dbReference type="EMBL" id="EF432053">
    <property type="protein sequence ID" value="ABP73413.1"/>
    <property type="molecule type" value="Genomic_DNA"/>
</dbReference>
<dbReference type="RefSeq" id="YP_001210327.1">
    <property type="nucleotide sequence ID" value="NC_009452.1"/>
</dbReference>
<dbReference type="SMR" id="A4ZUA9"/>
<dbReference type="GeneID" id="5129812"/>
<dbReference type="KEGG" id="vg:5129812"/>
<dbReference type="Proteomes" id="UP000000513">
    <property type="component" value="Segment"/>
</dbReference>
<keyword id="KW-1185">Reference proteome</keyword>